<keyword id="KW-0687">Ribonucleoprotein</keyword>
<keyword id="KW-0689">Ribosomal protein</keyword>
<keyword id="KW-0694">RNA-binding</keyword>
<keyword id="KW-0699">rRNA-binding</keyword>
<dbReference type="EMBL" id="FM211192">
    <property type="protein sequence ID" value="CAR71957.1"/>
    <property type="molecule type" value="Genomic_DNA"/>
</dbReference>
<dbReference type="SMR" id="B8ZSB7"/>
<dbReference type="KEGG" id="mlb:MLBr01861"/>
<dbReference type="HOGENOM" id="CLU_037562_3_2_11"/>
<dbReference type="Proteomes" id="UP000006900">
    <property type="component" value="Chromosome"/>
</dbReference>
<dbReference type="GO" id="GO:1990904">
    <property type="term" value="C:ribonucleoprotein complex"/>
    <property type="evidence" value="ECO:0007669"/>
    <property type="project" value="UniProtKB-KW"/>
</dbReference>
<dbReference type="GO" id="GO:0005840">
    <property type="term" value="C:ribosome"/>
    <property type="evidence" value="ECO:0007669"/>
    <property type="project" value="UniProtKB-KW"/>
</dbReference>
<dbReference type="GO" id="GO:0019843">
    <property type="term" value="F:rRNA binding"/>
    <property type="evidence" value="ECO:0007669"/>
    <property type="project" value="UniProtKB-UniRule"/>
</dbReference>
<dbReference type="GO" id="GO:0003735">
    <property type="term" value="F:structural constituent of ribosome"/>
    <property type="evidence" value="ECO:0007669"/>
    <property type="project" value="InterPro"/>
</dbReference>
<dbReference type="GO" id="GO:0006412">
    <property type="term" value="P:translation"/>
    <property type="evidence" value="ECO:0007669"/>
    <property type="project" value="UniProtKB-UniRule"/>
</dbReference>
<dbReference type="FunFam" id="3.30.70.330:FF:000001">
    <property type="entry name" value="50S ribosomal protein L23"/>
    <property type="match status" value="1"/>
</dbReference>
<dbReference type="Gene3D" id="3.30.70.330">
    <property type="match status" value="1"/>
</dbReference>
<dbReference type="HAMAP" id="MF_01369_B">
    <property type="entry name" value="Ribosomal_uL23_B"/>
    <property type="match status" value="1"/>
</dbReference>
<dbReference type="InterPro" id="IPR012677">
    <property type="entry name" value="Nucleotide-bd_a/b_plait_sf"/>
</dbReference>
<dbReference type="InterPro" id="IPR013025">
    <property type="entry name" value="Ribosomal_uL23-like"/>
</dbReference>
<dbReference type="InterPro" id="IPR012678">
    <property type="entry name" value="Ribosomal_uL23/eL15/eS24_sf"/>
</dbReference>
<dbReference type="InterPro" id="IPR001014">
    <property type="entry name" value="Ribosomal_uL23_CS"/>
</dbReference>
<dbReference type="NCBIfam" id="NF004363">
    <property type="entry name" value="PRK05738.2-4"/>
    <property type="match status" value="1"/>
</dbReference>
<dbReference type="NCBIfam" id="NF004364">
    <property type="entry name" value="PRK05738.2-5"/>
    <property type="match status" value="1"/>
</dbReference>
<dbReference type="PANTHER" id="PTHR11620">
    <property type="entry name" value="60S RIBOSOMAL PROTEIN L23A"/>
    <property type="match status" value="1"/>
</dbReference>
<dbReference type="Pfam" id="PF00276">
    <property type="entry name" value="Ribosomal_L23"/>
    <property type="match status" value="1"/>
</dbReference>
<dbReference type="SUPFAM" id="SSF54189">
    <property type="entry name" value="Ribosomal proteins S24e, L23 and L15e"/>
    <property type="match status" value="1"/>
</dbReference>
<dbReference type="PROSITE" id="PS00050">
    <property type="entry name" value="RIBOSOMAL_L23"/>
    <property type="match status" value="1"/>
</dbReference>
<proteinExistence type="inferred from homology"/>
<sequence>MATIADSRDIILAPVISEKSYGLLDDNVYTFVVHPDSNKTQIKIAIEKIFSVKVASVNTSNRKGKCKRTRTGFGRRKNTKRAIVTLAPGSKSIDLFGTPA</sequence>
<feature type="chain" id="PRO_1000184096" description="Large ribosomal subunit protein uL23">
    <location>
        <begin position="1"/>
        <end position="100"/>
    </location>
</feature>
<evidence type="ECO:0000255" key="1">
    <source>
        <dbReference type="HAMAP-Rule" id="MF_01369"/>
    </source>
</evidence>
<evidence type="ECO:0000305" key="2"/>
<protein>
    <recommendedName>
        <fullName evidence="1">Large ribosomal subunit protein uL23</fullName>
    </recommendedName>
    <alternativeName>
        <fullName evidence="2">50S ribosomal protein L23</fullName>
    </alternativeName>
</protein>
<gene>
    <name evidence="1" type="primary">rplW</name>
    <name type="ordered locus">MLBr01861</name>
</gene>
<comment type="function">
    <text evidence="1">One of the early assembly proteins it binds 23S rRNA. One of the proteins that surrounds the polypeptide exit tunnel on the outside of the ribosome. Forms the main docking site for trigger factor binding to the ribosome.</text>
</comment>
<comment type="subunit">
    <text evidence="1">Part of the 50S ribosomal subunit. Contacts protein L29, and trigger factor when it is bound to the ribosome.</text>
</comment>
<comment type="similarity">
    <text evidence="1">Belongs to the universal ribosomal protein uL23 family.</text>
</comment>
<reference key="1">
    <citation type="journal article" date="2009" name="Nat. Genet.">
        <title>Comparative genomic and phylogeographic analysis of Mycobacterium leprae.</title>
        <authorList>
            <person name="Monot M."/>
            <person name="Honore N."/>
            <person name="Garnier T."/>
            <person name="Zidane N."/>
            <person name="Sherafi D."/>
            <person name="Paniz-Mondolfi A."/>
            <person name="Matsuoka M."/>
            <person name="Taylor G.M."/>
            <person name="Donoghue H.D."/>
            <person name="Bouwman A."/>
            <person name="Mays S."/>
            <person name="Watson C."/>
            <person name="Lockwood D."/>
            <person name="Khamispour A."/>
            <person name="Dowlati Y."/>
            <person name="Jianping S."/>
            <person name="Rea T.H."/>
            <person name="Vera-Cabrera L."/>
            <person name="Stefani M.M."/>
            <person name="Banu S."/>
            <person name="Macdonald M."/>
            <person name="Sapkota B.R."/>
            <person name="Spencer J.S."/>
            <person name="Thomas J."/>
            <person name="Harshman K."/>
            <person name="Singh P."/>
            <person name="Busso P."/>
            <person name="Gattiker A."/>
            <person name="Rougemont J."/>
            <person name="Brennan P.J."/>
            <person name="Cole S.T."/>
        </authorList>
    </citation>
    <scope>NUCLEOTIDE SEQUENCE [LARGE SCALE GENOMIC DNA]</scope>
    <source>
        <strain>Br4923</strain>
    </source>
</reference>
<name>RL23_MYCLB</name>
<accession>B8ZSB7</accession>
<organism>
    <name type="scientific">Mycobacterium leprae (strain Br4923)</name>
    <dbReference type="NCBI Taxonomy" id="561304"/>
    <lineage>
        <taxon>Bacteria</taxon>
        <taxon>Bacillati</taxon>
        <taxon>Actinomycetota</taxon>
        <taxon>Actinomycetes</taxon>
        <taxon>Mycobacteriales</taxon>
        <taxon>Mycobacteriaceae</taxon>
        <taxon>Mycobacterium</taxon>
    </lineage>
</organism>